<accession>O36383</accession>
<organism>
    <name type="scientific">Alcelaphine herpesvirus 1 (strain C500)</name>
    <name type="common">AlHV-1</name>
    <name type="synonym">Malignant catarrhal fever virus</name>
    <dbReference type="NCBI Taxonomy" id="654901"/>
    <lineage>
        <taxon>Viruses</taxon>
        <taxon>Duplodnaviria</taxon>
        <taxon>Heunggongvirae</taxon>
        <taxon>Peploviricota</taxon>
        <taxon>Herviviricetes</taxon>
        <taxon>Herpesvirales</taxon>
        <taxon>Orthoherpesviridae</taxon>
        <taxon>Gammaherpesvirinae</taxon>
        <taxon>Macavirus</taxon>
        <taxon>Macavirus alcelaphinegamma1</taxon>
    </lineage>
</organism>
<reference key="1">
    <citation type="journal article" date="1997" name="J. Virol.">
        <title>Primary structure of the alcelaphine herpesvirus 1 genome.</title>
        <authorList>
            <person name="Ensser A."/>
            <person name="Pflanz R."/>
            <person name="Fleckenstein B."/>
        </authorList>
    </citation>
    <scope>NUCLEOTIDE SEQUENCE [LARGE SCALE GENOMIC DNA]</scope>
</reference>
<dbReference type="EMBL" id="AF005370">
    <property type="protein sequence ID" value="AAC58080.1"/>
    <property type="molecule type" value="Genomic_DNA"/>
</dbReference>
<dbReference type="PIR" id="T03128">
    <property type="entry name" value="T03128"/>
</dbReference>
<dbReference type="RefSeq" id="NP_065532.1">
    <property type="nucleotide sequence ID" value="NC_002531.1"/>
</dbReference>
<dbReference type="SMR" id="O36383"/>
<dbReference type="KEGG" id="vg:911797"/>
<dbReference type="Proteomes" id="UP000000941">
    <property type="component" value="Segment"/>
</dbReference>
<dbReference type="InterPro" id="IPR004280">
    <property type="entry name" value="Herpes_UL95"/>
</dbReference>
<dbReference type="Pfam" id="PF03038">
    <property type="entry name" value="Herpes_UL95"/>
    <property type="match status" value="1"/>
</dbReference>
<feature type="chain" id="PRO_0000405770" description="Gene 34 protein">
    <location>
        <begin position="1"/>
        <end position="343"/>
    </location>
</feature>
<protein>
    <recommendedName>
        <fullName>Gene 34 protein</fullName>
    </recommendedName>
</protein>
<proteinExistence type="predicted"/>
<keyword id="KW-1185">Reference proteome</keyword>
<organismHost>
    <name type="scientific">Connochaetes taurinus</name>
    <name type="common">Blue wildebeest</name>
    <dbReference type="NCBI Taxonomy" id="9927"/>
</organismHost>
<gene>
    <name type="primary">34</name>
</gene>
<sequence length="343" mass="37960">MLNLTKLHCNGDPEMAKKYNRGVKLAISLAESTPGQFKLIESPVNSFLIVTNLTVEDTVPHATHPPAGEGLDFSCLSLSRLNALDAIVQPGYDNNSLDAQGHQQPPPAGVRSLTKLTKDPYVTYKLTEWMWALRLNKDILINQALKLLGNPSTWTFCHPTDPLPWMWLLFYGPRSRCQEATCVYAKYFSTAGPVLLPPFFYDPGRDIQSFMSQACKFVKYFYDGEGLDSVLKDNNVPFDDSRIAEVLKALPSVSGSGLVLNKSCLLCCIYKQNLTSFHNVPDVSGGCLILQGAERHTDSAIGRSRCQTTGDIILWPSYNINSLVALFKSNEPSINERADTPGH</sequence>
<name>UL95_ALHV1</name>